<comment type="subunit">
    <text evidence="1">Part of the 50S ribosomal subunit. Contacts protein L32.</text>
</comment>
<comment type="similarity">
    <text evidence="1">Belongs to the bacterial ribosomal protein bL17 family.</text>
</comment>
<name>RL17_RICAE</name>
<organism>
    <name type="scientific">Rickettsia africae (strain ESF-5)</name>
    <dbReference type="NCBI Taxonomy" id="347255"/>
    <lineage>
        <taxon>Bacteria</taxon>
        <taxon>Pseudomonadati</taxon>
        <taxon>Pseudomonadota</taxon>
        <taxon>Alphaproteobacteria</taxon>
        <taxon>Rickettsiales</taxon>
        <taxon>Rickettsiaceae</taxon>
        <taxon>Rickettsieae</taxon>
        <taxon>Rickettsia</taxon>
        <taxon>spotted fever group</taxon>
    </lineage>
</organism>
<protein>
    <recommendedName>
        <fullName evidence="1">Large ribosomal subunit protein bL17</fullName>
    </recommendedName>
    <alternativeName>
        <fullName evidence="2">50S ribosomal protein L17</fullName>
    </alternativeName>
</protein>
<proteinExistence type="inferred from homology"/>
<dbReference type="EMBL" id="CP001612">
    <property type="protein sequence ID" value="ACP53742.1"/>
    <property type="molecule type" value="Genomic_DNA"/>
</dbReference>
<dbReference type="RefSeq" id="WP_012719912.1">
    <property type="nucleotide sequence ID" value="NC_012633.1"/>
</dbReference>
<dbReference type="SMR" id="C3PP82"/>
<dbReference type="KEGG" id="raf:RAF_ORF0887"/>
<dbReference type="HOGENOM" id="CLU_074407_2_0_5"/>
<dbReference type="Proteomes" id="UP000002305">
    <property type="component" value="Chromosome"/>
</dbReference>
<dbReference type="GO" id="GO:0022625">
    <property type="term" value="C:cytosolic large ribosomal subunit"/>
    <property type="evidence" value="ECO:0007669"/>
    <property type="project" value="TreeGrafter"/>
</dbReference>
<dbReference type="GO" id="GO:0003735">
    <property type="term" value="F:structural constituent of ribosome"/>
    <property type="evidence" value="ECO:0007669"/>
    <property type="project" value="InterPro"/>
</dbReference>
<dbReference type="GO" id="GO:0006412">
    <property type="term" value="P:translation"/>
    <property type="evidence" value="ECO:0007669"/>
    <property type="project" value="UniProtKB-UniRule"/>
</dbReference>
<dbReference type="FunFam" id="3.90.1030.10:FF:000001">
    <property type="entry name" value="50S ribosomal protein L17"/>
    <property type="match status" value="1"/>
</dbReference>
<dbReference type="Gene3D" id="3.90.1030.10">
    <property type="entry name" value="Ribosomal protein L17"/>
    <property type="match status" value="1"/>
</dbReference>
<dbReference type="HAMAP" id="MF_01368">
    <property type="entry name" value="Ribosomal_bL17"/>
    <property type="match status" value="1"/>
</dbReference>
<dbReference type="InterPro" id="IPR000456">
    <property type="entry name" value="Ribosomal_bL17"/>
</dbReference>
<dbReference type="InterPro" id="IPR047859">
    <property type="entry name" value="Ribosomal_bL17_CS"/>
</dbReference>
<dbReference type="InterPro" id="IPR036373">
    <property type="entry name" value="Ribosomal_bL17_sf"/>
</dbReference>
<dbReference type="NCBIfam" id="TIGR00059">
    <property type="entry name" value="L17"/>
    <property type="match status" value="1"/>
</dbReference>
<dbReference type="PANTHER" id="PTHR14413:SF16">
    <property type="entry name" value="LARGE RIBOSOMAL SUBUNIT PROTEIN BL17M"/>
    <property type="match status" value="1"/>
</dbReference>
<dbReference type="PANTHER" id="PTHR14413">
    <property type="entry name" value="RIBOSOMAL PROTEIN L17"/>
    <property type="match status" value="1"/>
</dbReference>
<dbReference type="Pfam" id="PF01196">
    <property type="entry name" value="Ribosomal_L17"/>
    <property type="match status" value="1"/>
</dbReference>
<dbReference type="SUPFAM" id="SSF64263">
    <property type="entry name" value="Prokaryotic ribosomal protein L17"/>
    <property type="match status" value="1"/>
</dbReference>
<dbReference type="PROSITE" id="PS01167">
    <property type="entry name" value="RIBOSOMAL_L17"/>
    <property type="match status" value="1"/>
</dbReference>
<reference key="1">
    <citation type="journal article" date="2009" name="BMC Genomics">
        <title>Analysis of the Rickettsia africae genome reveals that virulence acquisition in Rickettsia species may be explained by genome reduction.</title>
        <authorList>
            <person name="Fournier P.-E."/>
            <person name="El Karkouri K."/>
            <person name="Leroy Q."/>
            <person name="Robert C."/>
            <person name="Giumelli B."/>
            <person name="Renesto P."/>
            <person name="Socolovschi C."/>
            <person name="Parola P."/>
            <person name="Audic S."/>
            <person name="Raoult D."/>
        </authorList>
    </citation>
    <scope>NUCLEOTIDE SEQUENCE [LARGE SCALE GENOMIC DNA]</scope>
    <source>
        <strain>ESF-5</strain>
    </source>
</reference>
<accession>C3PP82</accession>
<keyword id="KW-0687">Ribonucleoprotein</keyword>
<keyword id="KW-0689">Ribosomal protein</keyword>
<gene>
    <name evidence="1" type="primary">rplQ</name>
    <name type="ordered locus">RAF_ORF0887</name>
</gene>
<evidence type="ECO:0000255" key="1">
    <source>
        <dbReference type="HAMAP-Rule" id="MF_01368"/>
    </source>
</evidence>
<evidence type="ECO:0000305" key="2"/>
<sequence length="136" mass="15517">MRHKIKSRKLNVTSSHRQAMLANMAVALVTHEQIKTTLPKAKELRPYIETLITKAKKADLMVRRSVLSKIKDKTAVEKLINILGIRYKDRPGGYTRIIKAGFRYGDLAPIAYIEFVDRDINAKGNIQQDANEEIKN</sequence>
<feature type="chain" id="PRO_1000215017" description="Large ribosomal subunit protein bL17">
    <location>
        <begin position="1"/>
        <end position="136"/>
    </location>
</feature>